<proteinExistence type="evidence at protein level"/>
<dbReference type="EMBL" id="Z35476">
    <property type="protein sequence ID" value="CAA84613.1"/>
    <property type="molecule type" value="mRNA"/>
</dbReference>
<dbReference type="EMBL" id="U35829">
    <property type="protein sequence ID" value="AAC49356.1"/>
    <property type="molecule type" value="Genomic_DNA"/>
</dbReference>
<dbReference type="EMBL" id="AC007915">
    <property type="protein sequence ID" value="AAF69169.1"/>
    <property type="status" value="ALT_SEQ"/>
    <property type="molecule type" value="Genomic_DNA"/>
</dbReference>
<dbReference type="EMBL" id="CP002684">
    <property type="protein sequence ID" value="AEE32083.1"/>
    <property type="molecule type" value="Genomic_DNA"/>
</dbReference>
<dbReference type="EMBL" id="AK118035">
    <property type="protein sequence ID" value="BAC42666.1"/>
    <property type="molecule type" value="mRNA"/>
</dbReference>
<dbReference type="EMBL" id="AF360227">
    <property type="protein sequence ID" value="AAK25937.1"/>
    <property type="molecule type" value="mRNA"/>
</dbReference>
<dbReference type="EMBL" id="AY040028">
    <property type="protein sequence ID" value="AAK64086.1"/>
    <property type="molecule type" value="mRNA"/>
</dbReference>
<dbReference type="EMBL" id="AK221784">
    <property type="protein sequence ID" value="BAD93909.1"/>
    <property type="molecule type" value="mRNA"/>
</dbReference>
<dbReference type="EMBL" id="AY087159">
    <property type="protein sequence ID" value="AAM64717.1"/>
    <property type="molecule type" value="mRNA"/>
</dbReference>
<dbReference type="PIR" id="G96509">
    <property type="entry name" value="G96509"/>
</dbReference>
<dbReference type="PIR" id="S58120">
    <property type="entry name" value="S58120"/>
</dbReference>
<dbReference type="RefSeq" id="NP_175128.1">
    <property type="nucleotide sequence ID" value="NM_103588.5"/>
</dbReference>
<dbReference type="SMR" id="Q39241"/>
<dbReference type="BioGRID" id="26307">
    <property type="interactions" value="76"/>
</dbReference>
<dbReference type="DIP" id="DIP-61886N"/>
<dbReference type="FunCoup" id="Q39241">
    <property type="interactions" value="1957"/>
</dbReference>
<dbReference type="IntAct" id="Q39241">
    <property type="interactions" value="76"/>
</dbReference>
<dbReference type="STRING" id="3702.Q39241"/>
<dbReference type="iPTMnet" id="Q39241"/>
<dbReference type="SwissPalm" id="Q39241"/>
<dbReference type="PaxDb" id="3702-AT1G45145.1"/>
<dbReference type="ProteomicsDB" id="228706"/>
<dbReference type="EnsemblPlants" id="AT1G45145.1">
    <property type="protein sequence ID" value="AT1G45145.1"/>
    <property type="gene ID" value="AT1G45145"/>
</dbReference>
<dbReference type="GeneID" id="841082"/>
<dbReference type="Gramene" id="AT1G45145.1">
    <property type="protein sequence ID" value="AT1G45145.1"/>
    <property type="gene ID" value="AT1G45145"/>
</dbReference>
<dbReference type="KEGG" id="ath:AT1G45145"/>
<dbReference type="Araport" id="AT1G45145"/>
<dbReference type="TAIR" id="AT1G45145">
    <property type="gene designation" value="TRX5"/>
</dbReference>
<dbReference type="eggNOG" id="KOG0907">
    <property type="taxonomic scope" value="Eukaryota"/>
</dbReference>
<dbReference type="HOGENOM" id="CLU_090389_14_1_1"/>
<dbReference type="InParanoid" id="Q39241"/>
<dbReference type="OMA" id="VIACHTI"/>
<dbReference type="OrthoDB" id="10263751at2759"/>
<dbReference type="PhylomeDB" id="Q39241"/>
<dbReference type="PRO" id="PR:Q39241"/>
<dbReference type="Proteomes" id="UP000006548">
    <property type="component" value="Chromosome 1"/>
</dbReference>
<dbReference type="ExpressionAtlas" id="Q39241">
    <property type="expression patterns" value="baseline and differential"/>
</dbReference>
<dbReference type="GO" id="GO:0005829">
    <property type="term" value="C:cytosol"/>
    <property type="evidence" value="ECO:0007005"/>
    <property type="project" value="TAIR"/>
</dbReference>
<dbReference type="GO" id="GO:0005634">
    <property type="term" value="C:nucleus"/>
    <property type="evidence" value="ECO:0007005"/>
    <property type="project" value="TAIR"/>
</dbReference>
<dbReference type="GO" id="GO:0005886">
    <property type="term" value="C:plasma membrane"/>
    <property type="evidence" value="ECO:0000314"/>
    <property type="project" value="TAIR"/>
</dbReference>
<dbReference type="GO" id="GO:0009506">
    <property type="term" value="C:plasmodesma"/>
    <property type="evidence" value="ECO:0007005"/>
    <property type="project" value="TAIR"/>
</dbReference>
<dbReference type="GO" id="GO:0016671">
    <property type="term" value="F:oxidoreductase activity, acting on a sulfur group of donors, disulfide as acceptor"/>
    <property type="evidence" value="ECO:0000314"/>
    <property type="project" value="TAIR"/>
</dbReference>
<dbReference type="GO" id="GO:0050832">
    <property type="term" value="P:defense response to fungus"/>
    <property type="evidence" value="ECO:0000315"/>
    <property type="project" value="TAIR"/>
</dbReference>
<dbReference type="GO" id="GO:0010188">
    <property type="term" value="P:response to microbial phytotoxin"/>
    <property type="evidence" value="ECO:0000315"/>
    <property type="project" value="TAIR"/>
</dbReference>
<dbReference type="GO" id="GO:0006979">
    <property type="term" value="P:response to oxidative stress"/>
    <property type="evidence" value="ECO:0000270"/>
    <property type="project" value="TAIR"/>
</dbReference>
<dbReference type="CDD" id="cd02947">
    <property type="entry name" value="TRX_family"/>
    <property type="match status" value="1"/>
</dbReference>
<dbReference type="FunFam" id="3.40.30.10:FF:000104">
    <property type="entry name" value="Thioredoxin"/>
    <property type="match status" value="1"/>
</dbReference>
<dbReference type="Gene3D" id="3.40.30.10">
    <property type="entry name" value="Glutaredoxin"/>
    <property type="match status" value="1"/>
</dbReference>
<dbReference type="InterPro" id="IPR036249">
    <property type="entry name" value="Thioredoxin-like_sf"/>
</dbReference>
<dbReference type="InterPro" id="IPR017937">
    <property type="entry name" value="Thioredoxin_CS"/>
</dbReference>
<dbReference type="InterPro" id="IPR013766">
    <property type="entry name" value="Thioredoxin_domain"/>
</dbReference>
<dbReference type="InterPro" id="IPR050620">
    <property type="entry name" value="Thioredoxin_H-type-like"/>
</dbReference>
<dbReference type="PANTHER" id="PTHR10438">
    <property type="entry name" value="THIOREDOXIN"/>
    <property type="match status" value="1"/>
</dbReference>
<dbReference type="PANTHER" id="PTHR10438:SF417">
    <property type="entry name" value="THIOREDOXIN H5"/>
    <property type="match status" value="1"/>
</dbReference>
<dbReference type="Pfam" id="PF00085">
    <property type="entry name" value="Thioredoxin"/>
    <property type="match status" value="1"/>
</dbReference>
<dbReference type="PRINTS" id="PR00421">
    <property type="entry name" value="THIOREDOXIN"/>
</dbReference>
<dbReference type="SUPFAM" id="SSF52833">
    <property type="entry name" value="Thioredoxin-like"/>
    <property type="match status" value="1"/>
</dbReference>
<dbReference type="PROSITE" id="PS00194">
    <property type="entry name" value="THIOREDOXIN_1"/>
    <property type="match status" value="1"/>
</dbReference>
<dbReference type="PROSITE" id="PS51352">
    <property type="entry name" value="THIOREDOXIN_2"/>
    <property type="match status" value="1"/>
</dbReference>
<accession>Q39241</accession>
<accession>Q38881</accession>
<accession>Q56X92</accession>
<accession>Q9MAJ6</accession>
<comment type="function">
    <text evidence="4 6">Thiol-disulfide oxidoreductase involved in response to pathogens and oxidative stresses. Required for the response to victorin, a phytotoxin which induces programmed cell death in sensitive plants. Possesses insulin disulfide bonds reducing activity.</text>
</comment>
<comment type="subunit">
    <text evidence="7">Interacts with MDH1.</text>
</comment>
<comment type="subcellular location">
    <subcellularLocation>
        <location evidence="1">Cytoplasm</location>
    </subcellularLocation>
</comment>
<comment type="induction">
    <text evidence="5 6">By treatment with salicylic acid (SA), abscisic acid (ABA), iron, copper and UV-C. Induced by wounding, oxidative stress, infection with incompatible P.syringae and treatment with the fungal phytotoxin victorin.</text>
</comment>
<comment type="disruption phenotype">
    <text evidence="6">Insensitivity to victorin phytotoxin.</text>
</comment>
<comment type="similarity">
    <text evidence="8">Belongs to the thioredoxin family. Plant H-type subfamily.</text>
</comment>
<comment type="caution">
    <text evidence="8">The active site contains a CPPC motif which differs from the conserved CGPC motif.</text>
</comment>
<comment type="sequence caution" evidence="8">
    <conflict type="erroneous gene model prediction">
        <sequence resource="EMBL-CDS" id="AAF69169"/>
    </conflict>
</comment>
<gene>
    <name type="primary">TRX5</name>
    <name type="synonym">LIV1</name>
    <name type="ordered locus">At1g45145</name>
    <name type="ORF">F27F5.21</name>
</gene>
<evidence type="ECO:0000250" key="1"/>
<evidence type="ECO:0000255" key="2"/>
<evidence type="ECO:0000255" key="3">
    <source>
        <dbReference type="PROSITE-ProRule" id="PRU00691"/>
    </source>
</evidence>
<evidence type="ECO:0000269" key="4">
    <source>
    </source>
</evidence>
<evidence type="ECO:0000269" key="5">
    <source>
    </source>
</evidence>
<evidence type="ECO:0000269" key="6">
    <source>
    </source>
</evidence>
<evidence type="ECO:0000269" key="7">
    <source>
    </source>
</evidence>
<evidence type="ECO:0000305" key="8"/>
<evidence type="ECO:0007744" key="9">
    <source>
    </source>
</evidence>
<sequence length="118" mass="13122">MAGEGEVIACHTLEVWNEKVKDANESKKLIVIDFTASWCPPCRFIAPVFAEMAKKFTNVVFFKIDVDELQAVAQEFKVEAMPTFVFMKEGNIIDRVVGAAKDEINEKLMKHGGLVASA</sequence>
<name>TRXH5_ARATH</name>
<reference key="1">
    <citation type="journal article" date="1995" name="Proc. Natl. Acad. Sci. U.S.A.">
        <title>Evidence for five divergent thioredoxin h sequences in Arabidopsis thaliana.</title>
        <authorList>
            <person name="Rivera-Madrid R."/>
            <person name="Mestres D."/>
            <person name="Marinho P."/>
            <person name="Jacquot J.-P."/>
            <person name="Decottignies P."/>
            <person name="Miginiac-Maslow M."/>
            <person name="Meyer Y."/>
        </authorList>
    </citation>
    <scope>NUCLEOTIDE SEQUENCE [MRNA]</scope>
    <source>
        <strain>cv. Columbia</strain>
        <tissue>Callus</tissue>
    </source>
</reference>
<reference key="2">
    <citation type="journal article" date="1996" name="J. Mol. Evol.">
        <title>Intron position as an evolutionary marker of thioredoxins and thioredoxin domains.</title>
        <authorList>
            <person name="Sahrawy M."/>
            <person name="Hecht V."/>
            <person name="Lopez Jaramillo J."/>
            <person name="Chueca A."/>
            <person name="Chartier Y."/>
            <person name="Meyer Y."/>
        </authorList>
    </citation>
    <scope>NUCLEOTIDE SEQUENCE [GENOMIC DNA]</scope>
    <source>
        <strain>cv. Landsberg erecta</strain>
    </source>
</reference>
<reference key="3">
    <citation type="journal article" date="2000" name="Nature">
        <title>Sequence and analysis of chromosome 1 of the plant Arabidopsis thaliana.</title>
        <authorList>
            <person name="Theologis A."/>
            <person name="Ecker J.R."/>
            <person name="Palm C.J."/>
            <person name="Federspiel N.A."/>
            <person name="Kaul S."/>
            <person name="White O."/>
            <person name="Alonso J."/>
            <person name="Altafi H."/>
            <person name="Araujo R."/>
            <person name="Bowman C.L."/>
            <person name="Brooks S.Y."/>
            <person name="Buehler E."/>
            <person name="Chan A."/>
            <person name="Chao Q."/>
            <person name="Chen H."/>
            <person name="Cheuk R.F."/>
            <person name="Chin C.W."/>
            <person name="Chung M.K."/>
            <person name="Conn L."/>
            <person name="Conway A.B."/>
            <person name="Conway A.R."/>
            <person name="Creasy T.H."/>
            <person name="Dewar K."/>
            <person name="Dunn P."/>
            <person name="Etgu P."/>
            <person name="Feldblyum T.V."/>
            <person name="Feng J.-D."/>
            <person name="Fong B."/>
            <person name="Fujii C.Y."/>
            <person name="Gill J.E."/>
            <person name="Goldsmith A.D."/>
            <person name="Haas B."/>
            <person name="Hansen N.F."/>
            <person name="Hughes B."/>
            <person name="Huizar L."/>
            <person name="Hunter J.L."/>
            <person name="Jenkins J."/>
            <person name="Johnson-Hopson C."/>
            <person name="Khan S."/>
            <person name="Khaykin E."/>
            <person name="Kim C.J."/>
            <person name="Koo H.L."/>
            <person name="Kremenetskaia I."/>
            <person name="Kurtz D.B."/>
            <person name="Kwan A."/>
            <person name="Lam B."/>
            <person name="Langin-Hooper S."/>
            <person name="Lee A."/>
            <person name="Lee J.M."/>
            <person name="Lenz C.A."/>
            <person name="Li J.H."/>
            <person name="Li Y.-P."/>
            <person name="Lin X."/>
            <person name="Liu S.X."/>
            <person name="Liu Z.A."/>
            <person name="Luros J.S."/>
            <person name="Maiti R."/>
            <person name="Marziali A."/>
            <person name="Militscher J."/>
            <person name="Miranda M."/>
            <person name="Nguyen M."/>
            <person name="Nierman W.C."/>
            <person name="Osborne B.I."/>
            <person name="Pai G."/>
            <person name="Peterson J."/>
            <person name="Pham P.K."/>
            <person name="Rizzo M."/>
            <person name="Rooney T."/>
            <person name="Rowley D."/>
            <person name="Sakano H."/>
            <person name="Salzberg S.L."/>
            <person name="Schwartz J.R."/>
            <person name="Shinn P."/>
            <person name="Southwick A.M."/>
            <person name="Sun H."/>
            <person name="Tallon L.J."/>
            <person name="Tambunga G."/>
            <person name="Toriumi M.J."/>
            <person name="Town C.D."/>
            <person name="Utterback T."/>
            <person name="Van Aken S."/>
            <person name="Vaysberg M."/>
            <person name="Vysotskaia V.S."/>
            <person name="Walker M."/>
            <person name="Wu D."/>
            <person name="Yu G."/>
            <person name="Fraser C.M."/>
            <person name="Venter J.C."/>
            <person name="Davis R.W."/>
        </authorList>
    </citation>
    <scope>NUCLEOTIDE SEQUENCE [LARGE SCALE GENOMIC DNA]</scope>
    <source>
        <strain>cv. Columbia</strain>
    </source>
</reference>
<reference key="4">
    <citation type="journal article" date="2017" name="Plant J.">
        <title>Araport11: a complete reannotation of the Arabidopsis thaliana reference genome.</title>
        <authorList>
            <person name="Cheng C.Y."/>
            <person name="Krishnakumar V."/>
            <person name="Chan A.P."/>
            <person name="Thibaud-Nissen F."/>
            <person name="Schobel S."/>
            <person name="Town C.D."/>
        </authorList>
    </citation>
    <scope>GENOME REANNOTATION</scope>
    <source>
        <strain>cv. Columbia</strain>
    </source>
</reference>
<reference key="5">
    <citation type="journal article" date="2002" name="Science">
        <title>Functional annotation of a full-length Arabidopsis cDNA collection.</title>
        <authorList>
            <person name="Seki M."/>
            <person name="Narusaka M."/>
            <person name="Kamiya A."/>
            <person name="Ishida J."/>
            <person name="Satou M."/>
            <person name="Sakurai T."/>
            <person name="Nakajima M."/>
            <person name="Enju A."/>
            <person name="Akiyama K."/>
            <person name="Oono Y."/>
            <person name="Muramatsu M."/>
            <person name="Hayashizaki Y."/>
            <person name="Kawai J."/>
            <person name="Carninci P."/>
            <person name="Itoh M."/>
            <person name="Ishii Y."/>
            <person name="Arakawa T."/>
            <person name="Shibata K."/>
            <person name="Shinagawa A."/>
            <person name="Shinozaki K."/>
        </authorList>
    </citation>
    <scope>NUCLEOTIDE SEQUENCE [LARGE SCALE MRNA]</scope>
    <source>
        <strain>cv. Columbia</strain>
    </source>
</reference>
<reference key="6">
    <citation type="journal article" date="2003" name="Science">
        <title>Empirical analysis of transcriptional activity in the Arabidopsis genome.</title>
        <authorList>
            <person name="Yamada K."/>
            <person name="Lim J."/>
            <person name="Dale J.M."/>
            <person name="Chen H."/>
            <person name="Shinn P."/>
            <person name="Palm C.J."/>
            <person name="Southwick A.M."/>
            <person name="Wu H.C."/>
            <person name="Kim C.J."/>
            <person name="Nguyen M."/>
            <person name="Pham P.K."/>
            <person name="Cheuk R.F."/>
            <person name="Karlin-Newmann G."/>
            <person name="Liu S.X."/>
            <person name="Lam B."/>
            <person name="Sakano H."/>
            <person name="Wu T."/>
            <person name="Yu G."/>
            <person name="Miranda M."/>
            <person name="Quach H.L."/>
            <person name="Tripp M."/>
            <person name="Chang C.H."/>
            <person name="Lee J.M."/>
            <person name="Toriumi M.J."/>
            <person name="Chan M.M."/>
            <person name="Tang C.C."/>
            <person name="Onodera C.S."/>
            <person name="Deng J.M."/>
            <person name="Akiyama K."/>
            <person name="Ansari Y."/>
            <person name="Arakawa T."/>
            <person name="Banh J."/>
            <person name="Banno F."/>
            <person name="Bowser L."/>
            <person name="Brooks S.Y."/>
            <person name="Carninci P."/>
            <person name="Chao Q."/>
            <person name="Choy N."/>
            <person name="Enju A."/>
            <person name="Goldsmith A.D."/>
            <person name="Gurjal M."/>
            <person name="Hansen N.F."/>
            <person name="Hayashizaki Y."/>
            <person name="Johnson-Hopson C."/>
            <person name="Hsuan V.W."/>
            <person name="Iida K."/>
            <person name="Karnes M."/>
            <person name="Khan S."/>
            <person name="Koesema E."/>
            <person name="Ishida J."/>
            <person name="Jiang P.X."/>
            <person name="Jones T."/>
            <person name="Kawai J."/>
            <person name="Kamiya A."/>
            <person name="Meyers C."/>
            <person name="Nakajima M."/>
            <person name="Narusaka M."/>
            <person name="Seki M."/>
            <person name="Sakurai T."/>
            <person name="Satou M."/>
            <person name="Tamse R."/>
            <person name="Vaysberg M."/>
            <person name="Wallender E.K."/>
            <person name="Wong C."/>
            <person name="Yamamura Y."/>
            <person name="Yuan S."/>
            <person name="Shinozaki K."/>
            <person name="Davis R.W."/>
            <person name="Theologis A."/>
            <person name="Ecker J.R."/>
        </authorList>
    </citation>
    <scope>NUCLEOTIDE SEQUENCE [LARGE SCALE MRNA]</scope>
    <source>
        <strain>cv. Columbia</strain>
    </source>
</reference>
<reference key="7">
    <citation type="submission" date="2005-03" db="EMBL/GenBank/DDBJ databases">
        <title>Large-scale analysis of RIKEN Arabidopsis full-length (RAFL) cDNAs.</title>
        <authorList>
            <person name="Totoki Y."/>
            <person name="Seki M."/>
            <person name="Ishida J."/>
            <person name="Nakajima M."/>
            <person name="Enju A."/>
            <person name="Kamiya A."/>
            <person name="Narusaka M."/>
            <person name="Shin-i T."/>
            <person name="Nakagawa M."/>
            <person name="Sakamoto N."/>
            <person name="Oishi K."/>
            <person name="Kohara Y."/>
            <person name="Kobayashi M."/>
            <person name="Toyoda A."/>
            <person name="Sakaki Y."/>
            <person name="Sakurai T."/>
            <person name="Iida K."/>
            <person name="Akiyama K."/>
            <person name="Satou M."/>
            <person name="Toyoda T."/>
            <person name="Konagaya A."/>
            <person name="Carninci P."/>
            <person name="Kawai J."/>
            <person name="Hayashizaki Y."/>
            <person name="Shinozaki K."/>
        </authorList>
    </citation>
    <scope>NUCLEOTIDE SEQUENCE [LARGE SCALE MRNA]</scope>
    <source>
        <strain>cv. Columbia</strain>
    </source>
</reference>
<reference key="8">
    <citation type="submission" date="2002-03" db="EMBL/GenBank/DDBJ databases">
        <title>Full-length cDNA from Arabidopsis thaliana.</title>
        <authorList>
            <person name="Brover V.V."/>
            <person name="Troukhan M.E."/>
            <person name="Alexandrov N.A."/>
            <person name="Lu Y.-P."/>
            <person name="Flavell R.B."/>
            <person name="Feldmann K.A."/>
        </authorList>
    </citation>
    <scope>NUCLEOTIDE SEQUENCE [LARGE SCALE MRNA]</scope>
</reference>
<reference key="9">
    <citation type="journal article" date="2004" name="Plant Cell Physiol.">
        <title>Target proteins of the cytosolic thioredoxins in Arabidopsis thaliana.</title>
        <authorList>
            <person name="Yamazaki D."/>
            <person name="Motohashi K."/>
            <person name="Kasama T."/>
            <person name="Hara Y."/>
            <person name="Hisabori T."/>
        </authorList>
    </citation>
    <scope>FUNCTION</scope>
</reference>
<reference key="10">
    <citation type="journal article" date="2004" name="Plant Physiol.">
        <title>The Arabidopsis cytosolic thioredoxin h5 gene induction by oxidative stress and its W-box-mediated response to pathogen elicitor.</title>
        <authorList>
            <person name="Laloi C."/>
            <person name="Mestres-Ortega D."/>
            <person name="Marco Y."/>
            <person name="Meyer Y."/>
            <person name="Reichheld J.P."/>
        </authorList>
    </citation>
    <scope>INDUCTION</scope>
</reference>
<reference key="11">
    <citation type="journal article" date="2007" name="Plant Cell">
        <title>Thioredoxin h5 is required for victorin sensitivity mediated by a CC-NBS-LRR gene in Arabidopsis.</title>
        <authorList>
            <person name="Sweat T.A."/>
            <person name="Wolpert T.J."/>
        </authorList>
    </citation>
    <scope>FUNCTION</scope>
    <scope>INDUCTION</scope>
    <scope>DISRUPTION PHENOTYPE</scope>
    <scope>MUTAGENESIS OF CYS-39 AND CYS-42</scope>
</reference>
<reference key="12">
    <citation type="journal article" date="2009" name="Mol. Plant">
        <title>Comparative genomic study of the thioredoxin family in photosynthetic organisms with emphasis on Populus trichocarpa.</title>
        <authorList>
            <person name="Chibani K."/>
            <person name="Wingsle G."/>
            <person name="Jacquot J.P."/>
            <person name="Gelhaye E."/>
            <person name="Rouhier N."/>
        </authorList>
    </citation>
    <scope>GENE FAMILY</scope>
    <scope>NOMENCLATURE</scope>
</reference>
<reference key="13">
    <citation type="journal article" date="2012" name="Mol. Cell. Proteomics">
        <title>Comparative large-scale characterisation of plant vs. mammal proteins reveals similar and idiosyncratic N-alpha acetylation features.</title>
        <authorList>
            <person name="Bienvenut W.V."/>
            <person name="Sumpton D."/>
            <person name="Martinez A."/>
            <person name="Lilla S."/>
            <person name="Espagne C."/>
            <person name="Meinnel T."/>
            <person name="Giglione C."/>
        </authorList>
    </citation>
    <scope>ACETYLATION [LARGE SCALE ANALYSIS] AT ALA-2</scope>
    <scope>CLEAVAGE OF INITIATOR METHIONINE [LARGE SCALE ANALYSIS]</scope>
    <scope>IDENTIFICATION BY MASS SPECTROMETRY [LARGE SCALE ANALYSIS]</scope>
</reference>
<reference key="14">
    <citation type="journal article" date="2018" name="J. Exp. Bot.">
        <title>Self-protection of cytosolic malate dehydrogenase against oxidative stress in Arabidopsis.</title>
        <authorList>
            <person name="Huang J."/>
            <person name="Niazi A.K."/>
            <person name="Young D."/>
            <person name="Rosado L.A."/>
            <person name="Vertommen D."/>
            <person name="Bodra N."/>
            <person name="Abdelgawwad M.R."/>
            <person name="Vignols F."/>
            <person name="Wei B."/>
            <person name="Wahni K."/>
            <person name="Bashandy T."/>
            <person name="Bariat L."/>
            <person name="Van Breusegem F."/>
            <person name="Messens J."/>
            <person name="Reichheld J.P."/>
        </authorList>
    </citation>
    <scope>INTERACTION WITH MDH1</scope>
</reference>
<protein>
    <recommendedName>
        <fullName>Thioredoxin H5</fullName>
        <shortName>AtTrxh5</shortName>
    </recommendedName>
    <alternativeName>
        <fullName>Protein LOCUS OF INSENSITIVITY TO VICTORIN 1</fullName>
    </alternativeName>
    <alternativeName>
        <fullName>Thioredoxin 5</fullName>
        <shortName>AtTRX5</shortName>
    </alternativeName>
</protein>
<organism>
    <name type="scientific">Arabidopsis thaliana</name>
    <name type="common">Mouse-ear cress</name>
    <dbReference type="NCBI Taxonomy" id="3702"/>
    <lineage>
        <taxon>Eukaryota</taxon>
        <taxon>Viridiplantae</taxon>
        <taxon>Streptophyta</taxon>
        <taxon>Embryophyta</taxon>
        <taxon>Tracheophyta</taxon>
        <taxon>Spermatophyta</taxon>
        <taxon>Magnoliopsida</taxon>
        <taxon>eudicotyledons</taxon>
        <taxon>Gunneridae</taxon>
        <taxon>Pentapetalae</taxon>
        <taxon>rosids</taxon>
        <taxon>malvids</taxon>
        <taxon>Brassicales</taxon>
        <taxon>Brassicaceae</taxon>
        <taxon>Camelineae</taxon>
        <taxon>Arabidopsis</taxon>
    </lineage>
</organism>
<keyword id="KW-0007">Acetylation</keyword>
<keyword id="KW-0963">Cytoplasm</keyword>
<keyword id="KW-1015">Disulfide bond</keyword>
<keyword id="KW-0249">Electron transport</keyword>
<keyword id="KW-0676">Redox-active center</keyword>
<keyword id="KW-1185">Reference proteome</keyword>
<keyword id="KW-0813">Transport</keyword>
<feature type="initiator methionine" description="Removed" evidence="9">
    <location>
        <position position="1"/>
    </location>
</feature>
<feature type="chain" id="PRO_0000120050" description="Thioredoxin H5">
    <location>
        <begin position="2"/>
        <end position="118"/>
    </location>
</feature>
<feature type="domain" description="Thioredoxin" evidence="3">
    <location>
        <begin position="2"/>
        <end position="113"/>
    </location>
</feature>
<feature type="active site" description="Nucleophile" evidence="2">
    <location>
        <position position="39"/>
    </location>
</feature>
<feature type="active site" description="Nucleophile" evidence="2">
    <location>
        <position position="42"/>
    </location>
</feature>
<feature type="modified residue" description="N-acetylalanine" evidence="9">
    <location>
        <position position="2"/>
    </location>
</feature>
<feature type="disulfide bond" description="Redox-active" evidence="3">
    <location>
        <begin position="39"/>
        <end position="42"/>
    </location>
</feature>
<feature type="mutagenesis site" description="Loss of sensitivity to victorin phytotoxin." evidence="6">
    <original>C</original>
    <variation>S</variation>
    <location>
        <position position="39"/>
    </location>
</feature>
<feature type="mutagenesis site" description="No effect on sensitivity to victorin phytotoxin." evidence="6">
    <original>C</original>
    <variation>S</variation>
    <location>
        <position position="42"/>
    </location>
</feature>
<feature type="sequence conflict" description="In Ref. 2; AAC49356." evidence="8" ref="2">
    <original>A</original>
    <variation>AL</variation>
    <location>
        <position position="118"/>
    </location>
</feature>